<sequence length="143" mass="16500">MIFMKELFLFLHVVLATFWVGGMLFLSLVVAPYLKDKPQIRNEAFQEVGKRFSLYGTFLSLFLLFVTGLVNTYLIQGGFRPSIHTKLGVFFVVVFISLLHDLWAGKKALYSEKHRVWAKWLGILNLILSLLLVYLGVRIRLGY</sequence>
<gene>
    <name type="ordered locus">aq_363</name>
</gene>
<name>Y363_AQUAE</name>
<comment type="subcellular location">
    <subcellularLocation>
        <location evidence="2">Cell membrane</location>
        <topology evidence="2">Multi-pass membrane protein</topology>
    </subcellularLocation>
</comment>
<keyword id="KW-1003">Cell membrane</keyword>
<keyword id="KW-0472">Membrane</keyword>
<keyword id="KW-1185">Reference proteome</keyword>
<keyword id="KW-0812">Transmembrane</keyword>
<keyword id="KW-1133">Transmembrane helix</keyword>
<organism>
    <name type="scientific">Aquifex aeolicus (strain VF5)</name>
    <dbReference type="NCBI Taxonomy" id="224324"/>
    <lineage>
        <taxon>Bacteria</taxon>
        <taxon>Pseudomonadati</taxon>
        <taxon>Aquificota</taxon>
        <taxon>Aquificia</taxon>
        <taxon>Aquificales</taxon>
        <taxon>Aquificaceae</taxon>
        <taxon>Aquifex</taxon>
    </lineage>
</organism>
<protein>
    <recommendedName>
        <fullName>Uncharacterized protein aq_363</fullName>
    </recommendedName>
</protein>
<reference key="1">
    <citation type="journal article" date="1998" name="Nature">
        <title>The complete genome of the hyperthermophilic bacterium Aquifex aeolicus.</title>
        <authorList>
            <person name="Deckert G."/>
            <person name="Warren P.V."/>
            <person name="Gaasterland T."/>
            <person name="Young W.G."/>
            <person name="Lenox A.L."/>
            <person name="Graham D.E."/>
            <person name="Overbeek R."/>
            <person name="Snead M.A."/>
            <person name="Keller M."/>
            <person name="Aujay M."/>
            <person name="Huber R."/>
            <person name="Feldman R.A."/>
            <person name="Short J.M."/>
            <person name="Olsen G.J."/>
            <person name="Swanson R.V."/>
        </authorList>
    </citation>
    <scope>NUCLEOTIDE SEQUENCE [LARGE SCALE GENOMIC DNA]</scope>
    <source>
        <strain>VF5</strain>
    </source>
</reference>
<feature type="chain" id="PRO_0000186854" description="Uncharacterized protein aq_363">
    <location>
        <begin position="1"/>
        <end position="143"/>
    </location>
</feature>
<feature type="transmembrane region" description="Helical" evidence="1">
    <location>
        <begin position="7"/>
        <end position="29"/>
    </location>
</feature>
<feature type="transmembrane region" description="Helical" evidence="1">
    <location>
        <begin position="52"/>
        <end position="74"/>
    </location>
</feature>
<feature type="transmembrane region" description="Helical" evidence="1">
    <location>
        <begin position="87"/>
        <end position="105"/>
    </location>
</feature>
<feature type="transmembrane region" description="Helical" evidence="1">
    <location>
        <begin position="120"/>
        <end position="142"/>
    </location>
</feature>
<proteinExistence type="predicted"/>
<accession>O66688</accession>
<evidence type="ECO:0000255" key="1"/>
<evidence type="ECO:0000305" key="2"/>
<dbReference type="EMBL" id="AE000657">
    <property type="protein sequence ID" value="AAC06650.1"/>
    <property type="molecule type" value="Genomic_DNA"/>
</dbReference>
<dbReference type="PIR" id="D70332">
    <property type="entry name" value="D70332"/>
</dbReference>
<dbReference type="RefSeq" id="NP_213248.1">
    <property type="nucleotide sequence ID" value="NC_000918.1"/>
</dbReference>
<dbReference type="SMR" id="O66688"/>
<dbReference type="STRING" id="224324.aq_363"/>
<dbReference type="EnsemblBacteria" id="AAC06650">
    <property type="protein sequence ID" value="AAC06650"/>
    <property type="gene ID" value="aq_363"/>
</dbReference>
<dbReference type="KEGG" id="aae:aq_363"/>
<dbReference type="eggNOG" id="COG1276">
    <property type="taxonomic scope" value="Bacteria"/>
</dbReference>
<dbReference type="HOGENOM" id="CLU_136219_0_0_0"/>
<dbReference type="InParanoid" id="O66688"/>
<dbReference type="OrthoDB" id="14179at2"/>
<dbReference type="Proteomes" id="UP000000798">
    <property type="component" value="Chromosome"/>
</dbReference>
<dbReference type="GO" id="GO:0005886">
    <property type="term" value="C:plasma membrane"/>
    <property type="evidence" value="ECO:0007669"/>
    <property type="project" value="UniProtKB-SubCell"/>
</dbReference>
<dbReference type="InterPro" id="IPR025423">
    <property type="entry name" value="TMEM205-like"/>
</dbReference>
<dbReference type="Pfam" id="PF13664">
    <property type="entry name" value="DUF4149"/>
    <property type="match status" value="1"/>
</dbReference>